<feature type="chain" id="PRO_0000047266" description="Zinc finger Y-chromosomal protein 1">
    <location>
        <begin position="1"/>
        <end position="794"/>
    </location>
</feature>
<feature type="zinc finger region" description="C2H2-type 1" evidence="2">
    <location>
        <begin position="411"/>
        <end position="433"/>
    </location>
</feature>
<feature type="zinc finger region" description="C2H2-type 2" evidence="2">
    <location>
        <begin position="442"/>
        <end position="464"/>
    </location>
</feature>
<feature type="zinc finger region" description="C2H2-type 3" evidence="2">
    <location>
        <begin position="477"/>
        <end position="499"/>
    </location>
</feature>
<feature type="zinc finger region" description="C2H2-type 4" evidence="2">
    <location>
        <begin position="508"/>
        <end position="531"/>
    </location>
</feature>
<feature type="zinc finger region" description="C2H2-type 5" evidence="2">
    <location>
        <begin position="537"/>
        <end position="559"/>
    </location>
</feature>
<feature type="zinc finger region" description="C2H2-type 6" evidence="2">
    <location>
        <begin position="565"/>
        <end position="588"/>
    </location>
</feature>
<feature type="zinc finger region" description="C2H2-type 7" evidence="2">
    <location>
        <begin position="594"/>
        <end position="616"/>
    </location>
</feature>
<feature type="zinc finger region" description="C2H2-type 8" evidence="2">
    <location>
        <begin position="622"/>
        <end position="645"/>
    </location>
</feature>
<feature type="zinc finger region" description="C2H2-type 9" evidence="2">
    <location>
        <begin position="651"/>
        <end position="673"/>
    </location>
</feature>
<feature type="zinc finger region" description="C2H2-type 10" evidence="2">
    <location>
        <begin position="679"/>
        <end position="702"/>
    </location>
</feature>
<feature type="zinc finger region" description="C2H2-type 11" evidence="2">
    <location>
        <begin position="708"/>
        <end position="730"/>
    </location>
</feature>
<feature type="zinc finger region" description="C2H2-type 12" evidence="2">
    <location>
        <begin position="736"/>
        <end position="759"/>
    </location>
</feature>
<feature type="zinc finger region" description="C2H2-type 13" evidence="2">
    <location>
        <begin position="765"/>
        <end position="788"/>
    </location>
</feature>
<feature type="short sequence motif" description="Nuclear localization signal" evidence="1">
    <location>
        <begin position="380"/>
        <end position="389"/>
    </location>
</feature>
<keyword id="KW-0010">Activator</keyword>
<keyword id="KW-0238">DNA-binding</keyword>
<keyword id="KW-0479">Metal-binding</keyword>
<keyword id="KW-0539">Nucleus</keyword>
<keyword id="KW-1185">Reference proteome</keyword>
<keyword id="KW-0677">Repeat</keyword>
<keyword id="KW-0804">Transcription</keyword>
<keyword id="KW-0805">Transcription regulation</keyword>
<keyword id="KW-0862">Zinc</keyword>
<keyword id="KW-0863">Zinc-finger</keyword>
<evidence type="ECO:0000255" key="1"/>
<evidence type="ECO:0000255" key="2">
    <source>
        <dbReference type="PROSITE-ProRule" id="PRU00042"/>
    </source>
</evidence>
<evidence type="ECO:0000305" key="3"/>
<accession>Q01611</accession>
<name>ZFY1_XENLA</name>
<dbReference type="EMBL" id="X68024">
    <property type="protein sequence ID" value="CAA48165.1"/>
    <property type="molecule type" value="mRNA"/>
</dbReference>
<dbReference type="PIR" id="S26648">
    <property type="entry name" value="S26648"/>
</dbReference>
<dbReference type="SMR" id="Q01611"/>
<dbReference type="AGR" id="Xenbase:XB-GENE-865304"/>
<dbReference type="Xenbase" id="XB-GENE-865304">
    <property type="gene designation" value="zfx.S"/>
</dbReference>
<dbReference type="Proteomes" id="UP000186698">
    <property type="component" value="Unplaced"/>
</dbReference>
<dbReference type="GO" id="GO:0005634">
    <property type="term" value="C:nucleus"/>
    <property type="evidence" value="ECO:0000318"/>
    <property type="project" value="GO_Central"/>
</dbReference>
<dbReference type="GO" id="GO:0001228">
    <property type="term" value="F:DNA-binding transcription activator activity, RNA polymerase II-specific"/>
    <property type="evidence" value="ECO:0000318"/>
    <property type="project" value="GO_Central"/>
</dbReference>
<dbReference type="GO" id="GO:0000978">
    <property type="term" value="F:RNA polymerase II cis-regulatory region sequence-specific DNA binding"/>
    <property type="evidence" value="ECO:0000318"/>
    <property type="project" value="GO_Central"/>
</dbReference>
<dbReference type="GO" id="GO:0008270">
    <property type="term" value="F:zinc ion binding"/>
    <property type="evidence" value="ECO:0007669"/>
    <property type="project" value="UniProtKB-KW"/>
</dbReference>
<dbReference type="GO" id="GO:1903706">
    <property type="term" value="P:regulation of hemopoiesis"/>
    <property type="evidence" value="ECO:0000318"/>
    <property type="project" value="GO_Central"/>
</dbReference>
<dbReference type="GO" id="GO:0006357">
    <property type="term" value="P:regulation of transcription by RNA polymerase II"/>
    <property type="evidence" value="ECO:0000318"/>
    <property type="project" value="GO_Central"/>
</dbReference>
<dbReference type="FunFam" id="3.30.160.60:FF:000054">
    <property type="entry name" value="Zinc finger protein 711"/>
    <property type="match status" value="1"/>
</dbReference>
<dbReference type="FunFam" id="3.30.160.60:FF:000209">
    <property type="entry name" value="Zinc finger protein 711"/>
    <property type="match status" value="3"/>
</dbReference>
<dbReference type="FunFam" id="3.30.160.60:FF:000170">
    <property type="entry name" value="Zinc finger protein 711 isoform X2"/>
    <property type="match status" value="1"/>
</dbReference>
<dbReference type="FunFam" id="3.30.160.60:FF:000607">
    <property type="entry name" value="zinc finger X-chromosomal protein-like isoform X1"/>
    <property type="match status" value="1"/>
</dbReference>
<dbReference type="FunFam" id="3.30.160.60:FF:000461">
    <property type="entry name" value="Zinc finger X-chromosomal protein-like protein"/>
    <property type="match status" value="1"/>
</dbReference>
<dbReference type="Gene3D" id="3.30.160.60">
    <property type="entry name" value="Classic Zinc Finger"/>
    <property type="match status" value="8"/>
</dbReference>
<dbReference type="InterPro" id="IPR050589">
    <property type="entry name" value="Ikaros_C2H2-ZF"/>
</dbReference>
<dbReference type="InterPro" id="IPR006794">
    <property type="entry name" value="Transcrp_activ_Zfx/Zfy-dom"/>
</dbReference>
<dbReference type="InterPro" id="IPR036236">
    <property type="entry name" value="Znf_C2H2_sf"/>
</dbReference>
<dbReference type="InterPro" id="IPR013087">
    <property type="entry name" value="Znf_C2H2_type"/>
</dbReference>
<dbReference type="PANTHER" id="PTHR24404">
    <property type="entry name" value="ZINC FINGER PROTEIN"/>
    <property type="match status" value="1"/>
</dbReference>
<dbReference type="Pfam" id="PF00096">
    <property type="entry name" value="zf-C2H2"/>
    <property type="match status" value="5"/>
</dbReference>
<dbReference type="Pfam" id="PF13909">
    <property type="entry name" value="zf-H2C2_5"/>
    <property type="match status" value="1"/>
</dbReference>
<dbReference type="Pfam" id="PF04704">
    <property type="entry name" value="Zfx_Zfy_act"/>
    <property type="match status" value="1"/>
</dbReference>
<dbReference type="SMART" id="SM00355">
    <property type="entry name" value="ZnF_C2H2"/>
    <property type="match status" value="13"/>
</dbReference>
<dbReference type="SUPFAM" id="SSF57667">
    <property type="entry name" value="beta-beta-alpha zinc fingers"/>
    <property type="match status" value="7"/>
</dbReference>
<dbReference type="PROSITE" id="PS00028">
    <property type="entry name" value="ZINC_FINGER_C2H2_1"/>
    <property type="match status" value="8"/>
</dbReference>
<dbReference type="PROSITE" id="PS50157">
    <property type="entry name" value="ZINC_FINGER_C2H2_2"/>
    <property type="match status" value="12"/>
</dbReference>
<proteinExistence type="evidence at transcript level"/>
<reference key="1">
    <citation type="journal article" date="1992" name="Nucleic Acids Res.">
        <title>Sequence of cDNA for Xenopus XZFY-1.</title>
        <authorList>
            <person name="Connor F.A."/>
            <person name="Ashworth A."/>
        </authorList>
    </citation>
    <scope>NUCLEOTIDE SEQUENCE [MRNA]</scope>
    <source>
        <tissue>Oocyte</tissue>
    </source>
</reference>
<protein>
    <recommendedName>
        <fullName>Zinc finger Y-chromosomal protein 1</fullName>
        <shortName>ZFY-1</shortName>
    </recommendedName>
</protein>
<organism>
    <name type="scientific">Xenopus laevis</name>
    <name type="common">African clawed frog</name>
    <dbReference type="NCBI Taxonomy" id="8355"/>
    <lineage>
        <taxon>Eukaryota</taxon>
        <taxon>Metazoa</taxon>
        <taxon>Chordata</taxon>
        <taxon>Craniata</taxon>
        <taxon>Vertebrata</taxon>
        <taxon>Euteleostomi</taxon>
        <taxon>Amphibia</taxon>
        <taxon>Batrachia</taxon>
        <taxon>Anura</taxon>
        <taxon>Pipoidea</taxon>
        <taxon>Pipidae</taxon>
        <taxon>Xenopodinae</taxon>
        <taxon>Xenopus</taxon>
        <taxon>Xenopus</taxon>
    </lineage>
</organism>
<gene>
    <name type="primary">zfy1</name>
</gene>
<comment type="function">
    <text>Probable transcriptional activator.</text>
</comment>
<comment type="subcellular location">
    <subcellularLocation>
        <location evidence="3">Nucleus</location>
    </subcellularLocation>
</comment>
<comment type="similarity">
    <text evidence="3">Belongs to the krueppel C2H2-type zinc-finger protein family. ZFX/ZFY subfamily.</text>
</comment>
<sequence>MEDVAELELQTTEPHAFFHASGVGERHLNGNEIIVEIQETVFVADGDGNMAVQGFGPDEGDSVVIQDVIEDVVIEDVQCSDILDGGRVSEAVIIPEQVLEDEVGTGEEEQVLEEDSLTSCDVPDNVLDPELVDGELTIPDPETGMHSVSGHVVIGEEITDDALEEDMISEEVLVADCVSEAVIDANGIPVHENDSEEVNCDDYLMISLDDAEKIDEDGAEEITMGSVVEGDSSKLDGSCPEVIKVYIFKADPGEEDLGGTVDIVESESENDHGDGFLDSHNGGRLPREKMVYMTVNDSQNDDDLDVAEIADEVYMEVIVGEEDAAVAHEHQLEDAELSKTFMPVAWAAAYGNNTDGIEHRNGTASALLHIDESDGLDRLTKQKLKKKRRGENRQYQTAIIIGPDGHPLTVYPCMICGKKFKSRGFLKRHMKNHPEHLVRKKYRCTDCDYTTNKKVSLHNHLESHKLTATVIKTEKDLECEECGKIFLHANALFAHKLTHNEKAGNKMHICKFCDYETAEQGLLNRHLLAVHSKSFPHICVECGKGFRHPSELKKHMRTHTGEKPYLCQYCDYRSADSSNLKTHVKTKHSKEMPFKCDICLQTFTDSKDLQEHAILHQESKNHQCLHCDHKSSNSSDLKRHIISVHTKDYPHKCEVCEKGFHRPSELKKHEAAHKGKKMHQCRHCEFHIADPFVLSRHILSVHTKELPYRCKRCKKGFRQQIELKKHMKTHSGKKVYQCEYCEYNTTDASGFKRHVISIHTKDYPHRCDYCKKGFRRPSEKNQHTLKHHKEASLM</sequence>